<keyword id="KW-0175">Coiled coil</keyword>
<keyword id="KW-0472">Membrane</keyword>
<keyword id="KW-1185">Reference proteome</keyword>
<keyword id="KW-0812">Transmembrane</keyword>
<keyword id="KW-1133">Transmembrane helix</keyword>
<comment type="subcellular location">
    <subcellularLocation>
        <location evidence="3">Membrane</location>
        <topology evidence="3">Single-pass membrane protein</topology>
    </subcellularLocation>
</comment>
<comment type="similarity">
    <text evidence="3">Belongs to the SMCO4 family.</text>
</comment>
<protein>
    <recommendedName>
        <fullName>Single-pass membrane and coiled-coil domain-containing protein 4</fullName>
    </recommendedName>
    <alternativeName>
        <fullName>Protein FN5</fullName>
    </alternativeName>
</protein>
<dbReference type="EMBL" id="AF197136">
    <property type="protein sequence ID" value="AAF86045.1"/>
    <property type="molecule type" value="mRNA"/>
</dbReference>
<dbReference type="EMBL" id="AK146267">
    <property type="protein sequence ID" value="BAE27026.1"/>
    <property type="molecule type" value="mRNA"/>
</dbReference>
<dbReference type="EMBL" id="BC017612">
    <property type="protein sequence ID" value="AAH17612.1"/>
    <property type="molecule type" value="mRNA"/>
</dbReference>
<dbReference type="CCDS" id="CCDS22838.1"/>
<dbReference type="RefSeq" id="NP_001346533.1">
    <property type="nucleotide sequence ID" value="NM_001359604.1"/>
</dbReference>
<dbReference type="RefSeq" id="NP_573477.2">
    <property type="nucleotide sequence ID" value="NM_133214.2"/>
</dbReference>
<dbReference type="RefSeq" id="XP_011240710.1">
    <property type="nucleotide sequence ID" value="XM_011242408.2"/>
</dbReference>
<dbReference type="RefSeq" id="XP_011240711.1">
    <property type="nucleotide sequence ID" value="XM_011242409.2"/>
</dbReference>
<dbReference type="RefSeq" id="XP_011240713.1">
    <property type="nucleotide sequence ID" value="XM_011242411.1"/>
</dbReference>
<dbReference type="RefSeq" id="XP_036010525.1">
    <property type="nucleotide sequence ID" value="XM_036154632.1"/>
</dbReference>
<dbReference type="SMR" id="Q9JIS3"/>
<dbReference type="BioGRID" id="228412">
    <property type="interactions" value="1"/>
</dbReference>
<dbReference type="FunCoup" id="Q9JIS3">
    <property type="interactions" value="28"/>
</dbReference>
<dbReference type="STRING" id="10090.ENSMUSP00000150121"/>
<dbReference type="PaxDb" id="10090-ENSMUSP00000044228"/>
<dbReference type="Antibodypedia" id="65692">
    <property type="antibodies" value="18 antibodies from 9 providers"/>
</dbReference>
<dbReference type="Ensembl" id="ENSMUST00000045620.10">
    <property type="protein sequence ID" value="ENSMUSP00000044228.4"/>
    <property type="gene ID" value="ENSMUSG00000058173.13"/>
</dbReference>
<dbReference type="Ensembl" id="ENSMUST00000178999.3">
    <property type="protein sequence ID" value="ENSMUSP00000136432.2"/>
    <property type="gene ID" value="ENSMUSG00000058173.13"/>
</dbReference>
<dbReference type="Ensembl" id="ENSMUST00000215907.2">
    <property type="protein sequence ID" value="ENSMUSP00000150121.2"/>
    <property type="gene ID" value="ENSMUSG00000058173.13"/>
</dbReference>
<dbReference type="GeneID" id="170748"/>
<dbReference type="KEGG" id="mmu:170748"/>
<dbReference type="UCSC" id="uc009ogc.1">
    <property type="organism name" value="mouse"/>
</dbReference>
<dbReference type="AGR" id="MGI:3039636"/>
<dbReference type="CTD" id="56935"/>
<dbReference type="MGI" id="MGI:3039636">
    <property type="gene designation" value="Smco4"/>
</dbReference>
<dbReference type="VEuPathDB" id="HostDB:ENSMUSG00000058173"/>
<dbReference type="eggNOG" id="ENOG502S7F4">
    <property type="taxonomic scope" value="Eukaryota"/>
</dbReference>
<dbReference type="GeneTree" id="ENSGT00390000015987"/>
<dbReference type="HOGENOM" id="CLU_209950_0_0_1"/>
<dbReference type="InParanoid" id="Q9JIS3"/>
<dbReference type="OMA" id="FFIYANT"/>
<dbReference type="TreeFam" id="TF324415"/>
<dbReference type="BioGRID-ORCS" id="170748">
    <property type="hits" value="2 hits in 74 CRISPR screens"/>
</dbReference>
<dbReference type="ChiTaRS" id="Smco4">
    <property type="organism name" value="mouse"/>
</dbReference>
<dbReference type="PRO" id="PR:Q9JIS3"/>
<dbReference type="Proteomes" id="UP000000589">
    <property type="component" value="Chromosome 9"/>
</dbReference>
<dbReference type="RNAct" id="Q9JIS3">
    <property type="molecule type" value="protein"/>
</dbReference>
<dbReference type="Bgee" id="ENSMUSG00000058173">
    <property type="expression patterns" value="Expressed in animal zygote and 200 other cell types or tissues"/>
</dbReference>
<dbReference type="GO" id="GO:0016020">
    <property type="term" value="C:membrane"/>
    <property type="evidence" value="ECO:0007669"/>
    <property type="project" value="UniProtKB-SubCell"/>
</dbReference>
<dbReference type="InterPro" id="IPR027960">
    <property type="entry name" value="DUF4519"/>
</dbReference>
<dbReference type="PANTHER" id="PTHR34644">
    <property type="entry name" value="SINGLE-PASS MEMBRANE AND COILED-COIL DOMAIN-CONTAINING PROTEIN 4"/>
    <property type="match status" value="1"/>
</dbReference>
<dbReference type="PANTHER" id="PTHR34644:SF2">
    <property type="entry name" value="SINGLE-PASS MEMBRANE AND COILED-COIL DOMAIN-CONTAINING PROTEIN 4"/>
    <property type="match status" value="1"/>
</dbReference>
<dbReference type="Pfam" id="PF15012">
    <property type="entry name" value="DUF4519"/>
    <property type="match status" value="1"/>
</dbReference>
<gene>
    <name type="primary">Smco4</name>
    <name type="synonym">Fn5</name>
</gene>
<evidence type="ECO:0000255" key="1"/>
<evidence type="ECO:0000256" key="2">
    <source>
        <dbReference type="SAM" id="MobiDB-lite"/>
    </source>
</evidence>
<evidence type="ECO:0000305" key="3"/>
<name>SMCO4_MOUSE</name>
<proteinExistence type="inferred from homology"/>
<sequence length="59" mass="6694">MRQLKGKPKKETSKDKKERKQAMQEARQQITTVVLPTLAVVVLLIVVFVYVATRPAVTE</sequence>
<accession>Q9JIS3</accession>
<accession>Q8VD32</accession>
<organism>
    <name type="scientific">Mus musculus</name>
    <name type="common">Mouse</name>
    <dbReference type="NCBI Taxonomy" id="10090"/>
    <lineage>
        <taxon>Eukaryota</taxon>
        <taxon>Metazoa</taxon>
        <taxon>Chordata</taxon>
        <taxon>Craniata</taxon>
        <taxon>Vertebrata</taxon>
        <taxon>Euteleostomi</taxon>
        <taxon>Mammalia</taxon>
        <taxon>Eutheria</taxon>
        <taxon>Euarchontoglires</taxon>
        <taxon>Glires</taxon>
        <taxon>Rodentia</taxon>
        <taxon>Myomorpha</taxon>
        <taxon>Muroidea</taxon>
        <taxon>Muridae</taxon>
        <taxon>Murinae</taxon>
        <taxon>Mus</taxon>
        <taxon>Mus</taxon>
    </lineage>
</organism>
<reference key="1">
    <citation type="journal article" date="2000" name="Gene">
        <title>Characterization of the Fugu rubripes NLK and FN5 genes flanking the NF1 (Neurofibromatosis type 1) gene in the 5' direction and mapping of the human counterparts.</title>
        <authorList>
            <person name="Kehrer-Sawatzki H."/>
            <person name="Moschgath E."/>
            <person name="Maier C."/>
            <person name="Legius E."/>
            <person name="Elgar G."/>
            <person name="Krone W."/>
        </authorList>
    </citation>
    <scope>NUCLEOTIDE SEQUENCE [MRNA]</scope>
</reference>
<reference key="2">
    <citation type="journal article" date="2005" name="Science">
        <title>The transcriptional landscape of the mammalian genome.</title>
        <authorList>
            <person name="Carninci P."/>
            <person name="Kasukawa T."/>
            <person name="Katayama S."/>
            <person name="Gough J."/>
            <person name="Frith M.C."/>
            <person name="Maeda N."/>
            <person name="Oyama R."/>
            <person name="Ravasi T."/>
            <person name="Lenhard B."/>
            <person name="Wells C."/>
            <person name="Kodzius R."/>
            <person name="Shimokawa K."/>
            <person name="Bajic V.B."/>
            <person name="Brenner S.E."/>
            <person name="Batalov S."/>
            <person name="Forrest A.R."/>
            <person name="Zavolan M."/>
            <person name="Davis M.J."/>
            <person name="Wilming L.G."/>
            <person name="Aidinis V."/>
            <person name="Allen J.E."/>
            <person name="Ambesi-Impiombato A."/>
            <person name="Apweiler R."/>
            <person name="Aturaliya R.N."/>
            <person name="Bailey T.L."/>
            <person name="Bansal M."/>
            <person name="Baxter L."/>
            <person name="Beisel K.W."/>
            <person name="Bersano T."/>
            <person name="Bono H."/>
            <person name="Chalk A.M."/>
            <person name="Chiu K.P."/>
            <person name="Choudhary V."/>
            <person name="Christoffels A."/>
            <person name="Clutterbuck D.R."/>
            <person name="Crowe M.L."/>
            <person name="Dalla E."/>
            <person name="Dalrymple B.P."/>
            <person name="de Bono B."/>
            <person name="Della Gatta G."/>
            <person name="di Bernardo D."/>
            <person name="Down T."/>
            <person name="Engstrom P."/>
            <person name="Fagiolini M."/>
            <person name="Faulkner G."/>
            <person name="Fletcher C.F."/>
            <person name="Fukushima T."/>
            <person name="Furuno M."/>
            <person name="Futaki S."/>
            <person name="Gariboldi M."/>
            <person name="Georgii-Hemming P."/>
            <person name="Gingeras T.R."/>
            <person name="Gojobori T."/>
            <person name="Green R.E."/>
            <person name="Gustincich S."/>
            <person name="Harbers M."/>
            <person name="Hayashi Y."/>
            <person name="Hensch T.K."/>
            <person name="Hirokawa N."/>
            <person name="Hill D."/>
            <person name="Huminiecki L."/>
            <person name="Iacono M."/>
            <person name="Ikeo K."/>
            <person name="Iwama A."/>
            <person name="Ishikawa T."/>
            <person name="Jakt M."/>
            <person name="Kanapin A."/>
            <person name="Katoh M."/>
            <person name="Kawasawa Y."/>
            <person name="Kelso J."/>
            <person name="Kitamura H."/>
            <person name="Kitano H."/>
            <person name="Kollias G."/>
            <person name="Krishnan S.P."/>
            <person name="Kruger A."/>
            <person name="Kummerfeld S.K."/>
            <person name="Kurochkin I.V."/>
            <person name="Lareau L.F."/>
            <person name="Lazarevic D."/>
            <person name="Lipovich L."/>
            <person name="Liu J."/>
            <person name="Liuni S."/>
            <person name="McWilliam S."/>
            <person name="Madan Babu M."/>
            <person name="Madera M."/>
            <person name="Marchionni L."/>
            <person name="Matsuda H."/>
            <person name="Matsuzawa S."/>
            <person name="Miki H."/>
            <person name="Mignone F."/>
            <person name="Miyake S."/>
            <person name="Morris K."/>
            <person name="Mottagui-Tabar S."/>
            <person name="Mulder N."/>
            <person name="Nakano N."/>
            <person name="Nakauchi H."/>
            <person name="Ng P."/>
            <person name="Nilsson R."/>
            <person name="Nishiguchi S."/>
            <person name="Nishikawa S."/>
            <person name="Nori F."/>
            <person name="Ohara O."/>
            <person name="Okazaki Y."/>
            <person name="Orlando V."/>
            <person name="Pang K.C."/>
            <person name="Pavan W.J."/>
            <person name="Pavesi G."/>
            <person name="Pesole G."/>
            <person name="Petrovsky N."/>
            <person name="Piazza S."/>
            <person name="Reed J."/>
            <person name="Reid J.F."/>
            <person name="Ring B.Z."/>
            <person name="Ringwald M."/>
            <person name="Rost B."/>
            <person name="Ruan Y."/>
            <person name="Salzberg S.L."/>
            <person name="Sandelin A."/>
            <person name="Schneider C."/>
            <person name="Schoenbach C."/>
            <person name="Sekiguchi K."/>
            <person name="Semple C.A."/>
            <person name="Seno S."/>
            <person name="Sessa L."/>
            <person name="Sheng Y."/>
            <person name="Shibata Y."/>
            <person name="Shimada H."/>
            <person name="Shimada K."/>
            <person name="Silva D."/>
            <person name="Sinclair B."/>
            <person name="Sperling S."/>
            <person name="Stupka E."/>
            <person name="Sugiura K."/>
            <person name="Sultana R."/>
            <person name="Takenaka Y."/>
            <person name="Taki K."/>
            <person name="Tammoja K."/>
            <person name="Tan S.L."/>
            <person name="Tang S."/>
            <person name="Taylor M.S."/>
            <person name="Tegner J."/>
            <person name="Teichmann S.A."/>
            <person name="Ueda H.R."/>
            <person name="van Nimwegen E."/>
            <person name="Verardo R."/>
            <person name="Wei C.L."/>
            <person name="Yagi K."/>
            <person name="Yamanishi H."/>
            <person name="Zabarovsky E."/>
            <person name="Zhu S."/>
            <person name="Zimmer A."/>
            <person name="Hide W."/>
            <person name="Bult C."/>
            <person name="Grimmond S.M."/>
            <person name="Teasdale R.D."/>
            <person name="Liu E.T."/>
            <person name="Brusic V."/>
            <person name="Quackenbush J."/>
            <person name="Wahlestedt C."/>
            <person name="Mattick J.S."/>
            <person name="Hume D.A."/>
            <person name="Kai C."/>
            <person name="Sasaki D."/>
            <person name="Tomaru Y."/>
            <person name="Fukuda S."/>
            <person name="Kanamori-Katayama M."/>
            <person name="Suzuki M."/>
            <person name="Aoki J."/>
            <person name="Arakawa T."/>
            <person name="Iida J."/>
            <person name="Imamura K."/>
            <person name="Itoh M."/>
            <person name="Kato T."/>
            <person name="Kawaji H."/>
            <person name="Kawagashira N."/>
            <person name="Kawashima T."/>
            <person name="Kojima M."/>
            <person name="Kondo S."/>
            <person name="Konno H."/>
            <person name="Nakano K."/>
            <person name="Ninomiya N."/>
            <person name="Nishio T."/>
            <person name="Okada M."/>
            <person name="Plessy C."/>
            <person name="Shibata K."/>
            <person name="Shiraki T."/>
            <person name="Suzuki S."/>
            <person name="Tagami M."/>
            <person name="Waki K."/>
            <person name="Watahiki A."/>
            <person name="Okamura-Oho Y."/>
            <person name="Suzuki H."/>
            <person name="Kawai J."/>
            <person name="Hayashizaki Y."/>
        </authorList>
    </citation>
    <scope>NUCLEOTIDE SEQUENCE [LARGE SCALE MRNA]</scope>
    <source>
        <strain>DBA/2J</strain>
    </source>
</reference>
<reference key="3">
    <citation type="journal article" date="2004" name="Genome Res.">
        <title>The status, quality, and expansion of the NIH full-length cDNA project: the Mammalian Gene Collection (MGC).</title>
        <authorList>
            <consortium name="The MGC Project Team"/>
        </authorList>
    </citation>
    <scope>NUCLEOTIDE SEQUENCE [LARGE SCALE MRNA]</scope>
    <source>
        <strain>FVB/N</strain>
        <tissue>Salivary gland</tissue>
    </source>
</reference>
<feature type="chain" id="PRO_0000087320" description="Single-pass membrane and coiled-coil domain-containing protein 4">
    <location>
        <begin position="1"/>
        <end position="59"/>
    </location>
</feature>
<feature type="transmembrane region" description="Helical" evidence="1">
    <location>
        <begin position="32"/>
        <end position="52"/>
    </location>
</feature>
<feature type="region of interest" description="Disordered" evidence="2">
    <location>
        <begin position="1"/>
        <end position="23"/>
    </location>
</feature>
<feature type="coiled-coil region" evidence="1">
    <location>
        <begin position="9"/>
        <end position="31"/>
    </location>
</feature>
<feature type="compositionally biased region" description="Basic and acidic residues" evidence="2">
    <location>
        <begin position="9"/>
        <end position="22"/>
    </location>
</feature>
<feature type="sequence conflict" description="In Ref. 1; AAF86045." evidence="3" ref="1">
    <original>KQ</original>
    <variation>NE</variation>
    <location>
        <begin position="20"/>
        <end position="21"/>
    </location>
</feature>
<feature type="sequence conflict" description="In Ref. 1; AAF86045." evidence="3" ref="1">
    <original>QQ</original>
    <variation>HE</variation>
    <location>
        <begin position="28"/>
        <end position="29"/>
    </location>
</feature>